<dbReference type="EC" id="2.7.7.48" evidence="2"/>
<dbReference type="EMBL" id="Z69910">
    <property type="protein sequence ID" value="CAA93799.1"/>
    <property type="molecule type" value="Genomic_RNA"/>
</dbReference>
<dbReference type="EMBL" id="Z69910">
    <property type="protein sequence ID" value="CTQ57207.1"/>
    <property type="molecule type" value="Genomic_RNA"/>
</dbReference>
<dbReference type="KEGG" id="vg:1725261"/>
<dbReference type="KEGG" id="vg:940200"/>
<dbReference type="Proteomes" id="UP000008927">
    <property type="component" value="Genome"/>
</dbReference>
<dbReference type="GO" id="GO:0000166">
    <property type="term" value="F:nucleotide binding"/>
    <property type="evidence" value="ECO:0007669"/>
    <property type="project" value="UniProtKB-KW"/>
</dbReference>
<dbReference type="GO" id="GO:0003723">
    <property type="term" value="F:RNA binding"/>
    <property type="evidence" value="ECO:0007669"/>
    <property type="project" value="InterPro"/>
</dbReference>
<dbReference type="GO" id="GO:0003968">
    <property type="term" value="F:RNA-directed RNA polymerase activity"/>
    <property type="evidence" value="ECO:0007669"/>
    <property type="project" value="UniProtKB-KW"/>
</dbReference>
<dbReference type="GO" id="GO:0039694">
    <property type="term" value="P:viral RNA genome replication"/>
    <property type="evidence" value="ECO:0007669"/>
    <property type="project" value="InterPro"/>
</dbReference>
<dbReference type="GO" id="GO:0075523">
    <property type="term" value="P:viral translational frameshifting"/>
    <property type="evidence" value="ECO:0007669"/>
    <property type="project" value="UniProtKB-KW"/>
</dbReference>
<dbReference type="CDD" id="cd23234">
    <property type="entry name" value="Calvusvirinae_RdRp"/>
    <property type="match status" value="1"/>
</dbReference>
<dbReference type="Gene3D" id="3.30.70.270">
    <property type="match status" value="1"/>
</dbReference>
<dbReference type="InterPro" id="IPR043502">
    <property type="entry name" value="DNA/RNA_pol_sf"/>
</dbReference>
<dbReference type="InterPro" id="IPR043128">
    <property type="entry name" value="Rev_trsase/Diguanyl_cyclase"/>
</dbReference>
<dbReference type="InterPro" id="IPR007094">
    <property type="entry name" value="RNA-dir_pol_PSvirus"/>
</dbReference>
<dbReference type="InterPro" id="IPR002166">
    <property type="entry name" value="RNA_pol_HCV"/>
</dbReference>
<dbReference type="Pfam" id="PF00998">
    <property type="entry name" value="RdRP_3"/>
    <property type="match status" value="1"/>
</dbReference>
<dbReference type="SUPFAM" id="SSF56672">
    <property type="entry name" value="DNA/RNA polymerases"/>
    <property type="match status" value="1"/>
</dbReference>
<dbReference type="PROSITE" id="PS50507">
    <property type="entry name" value="RDRP_SSRNA_POS"/>
    <property type="match status" value="1"/>
</dbReference>
<organism>
    <name type="scientific">Groundnut rosette virus (strain MC1)</name>
    <name type="common">GRV</name>
    <dbReference type="NCBI Taxonomy" id="1005060"/>
    <lineage>
        <taxon>Viruses</taxon>
        <taxon>Riboviria</taxon>
        <taxon>Orthornavirae</taxon>
        <taxon>Kitrinoviricota</taxon>
        <taxon>Tolucaviricetes</taxon>
        <taxon>Tolivirales</taxon>
        <taxon>Tombusviridae</taxon>
        <taxon>Calvusvirinae</taxon>
        <taxon>Umbravirus</taxon>
        <taxon>Umbravirus arachidis</taxon>
    </lineage>
</organism>
<organismHost>
    <name type="scientific">Clitoria</name>
    <dbReference type="NCBI Taxonomy" id="43365"/>
</organismHost>
<organismHost>
    <name type="scientific">Lablab purpureus</name>
    <name type="common">Hyacinth bean</name>
    <name type="synonym">Dolichos lablab</name>
    <dbReference type="NCBI Taxonomy" id="35936"/>
</organismHost>
<organismHost>
    <name type="scientific">Medicago sativa</name>
    <name type="common">Alfalfa</name>
    <dbReference type="NCBI Taxonomy" id="3879"/>
</organismHost>
<organismHost>
    <name type="scientific">Phaseolus vulgaris</name>
    <name type="common">Kidney bean</name>
    <name type="synonym">French bean</name>
    <dbReference type="NCBI Taxonomy" id="3885"/>
</organismHost>
<organismHost>
    <name type="scientific">Vigna unguiculata</name>
    <name type="common">Cowpea</name>
    <dbReference type="NCBI Taxonomy" id="3917"/>
</organismHost>
<reference key="1">
    <citation type="journal article" date="1996" name="J. Gen. Virol.">
        <title>Complete nucleotide sequence and organization of the RNA genome of groundnut rosette umbravirus.</title>
        <authorList>
            <person name="Taliansky M.E."/>
            <person name="Robinson D.J."/>
            <person name="Murant A.F."/>
        </authorList>
    </citation>
    <scope>NUCLEOTIDE SEQUENCE [GENOMIC RNA] (ISOFORM ORF1 PROTEIN)</scope>
    <scope>RIBOSOMAL FRAMESHIFT</scope>
</reference>
<accession>Q67683</accession>
<accession>A0A0K3AU46</accession>
<comment type="function">
    <text evidence="4">RNA-dependent RNA polymerase replicates the viral genome.</text>
</comment>
<comment type="catalytic activity">
    <reaction evidence="2">
        <text>RNA(n) + a ribonucleoside 5'-triphosphate = RNA(n+1) + diphosphate</text>
        <dbReference type="Rhea" id="RHEA:21248"/>
        <dbReference type="Rhea" id="RHEA-COMP:14527"/>
        <dbReference type="Rhea" id="RHEA-COMP:17342"/>
        <dbReference type="ChEBI" id="CHEBI:33019"/>
        <dbReference type="ChEBI" id="CHEBI:61557"/>
        <dbReference type="ChEBI" id="CHEBI:140395"/>
        <dbReference type="EC" id="2.7.7.48"/>
    </reaction>
</comment>
<comment type="alternative products">
    <event type="ribosomal frameshifting"/>
    <isoform>
        <id>Q67683-1</id>
        <name>RNA-directed RNA polymerase</name>
        <sequence type="displayed"/>
    </isoform>
    <isoform>
        <id>Q67683-2</id>
        <name>ORF1 protein</name>
        <sequence type="described" ref="VSP_041426"/>
    </isoform>
    <text evidence="3">Isoform RNA-directed RNA polymerase is produced by -1 ribosomal frameshifting at the ORF1-ORF2 genes boundary. Isoform ORF1 protein is produced by conventional translation.</text>
</comment>
<evidence type="ECO:0000255" key="1"/>
<evidence type="ECO:0000255" key="2">
    <source>
        <dbReference type="PROSITE-ProRule" id="PRU00539"/>
    </source>
</evidence>
<evidence type="ECO:0000269" key="3">
    <source>
    </source>
</evidence>
<evidence type="ECO:0000305" key="4"/>
<feature type="chain" id="PRO_5000147674" description="RNA-directed RNA polymerase" evidence="1">
    <location>
        <begin position="1"/>
        <end position="839"/>
    </location>
</feature>
<feature type="domain" description="RdRp catalytic" evidence="2">
    <location>
        <begin position="504"/>
        <end position="619"/>
    </location>
</feature>
<feature type="splice variant" id="VSP_041426" description="In isoform ORF1 protein." evidence="3">
    <location>
        <begin position="286"/>
        <end position="839"/>
    </location>
</feature>
<gene>
    <name type="ORF">ORF1-ORF2</name>
</gene>
<proteinExistence type="predicted"/>
<keyword id="KW-0547">Nucleotide-binding</keyword>
<keyword id="KW-0548">Nucleotidyltransferase</keyword>
<keyword id="KW-1185">Reference proteome</keyword>
<keyword id="KW-0688">Ribosomal frameshifting</keyword>
<keyword id="KW-0696">RNA-directed RNA polymerase</keyword>
<keyword id="KW-0808">Transferase</keyword>
<keyword id="KW-0693">Viral RNA replication</keyword>
<name>RDRP_GRVMC</name>
<protein>
    <recommendedName>
        <fullName evidence="2">RNA-directed RNA polymerase</fullName>
        <shortName>RdRp</shortName>
        <ecNumber evidence="2">2.7.7.48</ecNumber>
    </recommendedName>
</protein>
<sequence>MATIRHIMDWLRPTFTPLAGVKSRQECIAHYGDDWALMITQSRMTLSAEAQVNAWYEGGAEVNGSIPSVEGNAAAPQAAAVVAEPPHPSPAENEGEDASWVAALPAPPTYEVVQGRAPTLEEIHGASRLQIVPYTGRARVIGEDEVLPSPVLSSIWRATRCPGRILRVLGTLLKPGACQRHLEDLREVQPQVCVGNPCEVKLQEEGAPMAYMNAQSIAMELRAMFGWQAATPANRELGNRVARDILRDGCGATREQIWYMSSLALHMWFQPTLCDLAIKAGAQNFLVGEVYARSGVETKTRPKILSPQIKVKLAARPRPVKRVSYNVDVLGPSADYGVHNNSLNNLVRGVNERVFYTNNQGKLPLAPAAGAYQQIDCAALKQFRVTPWSLDDVWMSYKGSQRVRYKQAVDSLGMRPLSKSDARVSTFIKAEKVNFRAKPDPAPRVIQPRDPRFNAVFAKYIKPLEPLLYKALGKLYKYPCVAKGFNAVETGEIVAKKWKMFANPVCVGLDASRFDQHVSVDALRFTHGVYRRFVKSSEFDKLLRWMYTNRCRGAAKDGFVKYTVNGCRMSGDMDTALGNCVLMVLMTRHLLMSLGIPHELLDNGDDCIVIMDQEHLAKFNDAVKPYYSNLGFTMKVEEPVYSLERVDFCQTRPVYDGKKWRMVRHITSVAKDCCTVINWEQLPSWLSAIGECGIAVAGGIPVHNSFLRYLMRVGGTKGGIENHLLWKNEGLSWYRMGMDLSHEKVVSDEARLSFQTAFGISPTMQRALEDLYDGLGAPTVNGCDYRTVKTRDCREIECMPPRHYNHYFIDCGMQPAGSQEQYVNPGYTIFEAAALWAQC</sequence>